<sequence>MANTLVGRKRIRKFFGKIKEVAEMPNLIEVQKASYDQFLMVDEPEGGRADEGLQSVFKSVFPISDFASTALLEFVRYTFEAPKYDVDECRQRGITFAAPLKVTLRLIVFDVDPDTQAKSVKDIKEQDVYMGDMPLMTENGTFIVNGTERVIVSQMHRSPGVFFDHDKGKTHSSGKLLFAARIIPYRGSWLDVEFDAKDIVHVRIDRKRKLPATSLLYALGLDGEEILSTFYNKVVYDRDGADWRVPFDAERMKGMKATVDLIDADSGEVVLEAGKKLNARNARQITEKGTKFLKATDEDLVGQYVAEDLVNAQTGEIWAEAGEEVTDKLLKSLEEVGITELPVLDIDHVNIGPYIRNTLAVDKNSNREGALFDIYRVMRPGEPPTLETAEAMFHSLFFDSERYDLSAVGRVKMNMRLDLDAADTVRTLRKEDMLAVVKALVELRDGKGEVDDIDHLGNRRVRSVGELMENQYRLGLLRMERAIRERMSQVDIDTVMPQDLINAKPAAAAVREFFGSSQLSQFMDQTNPLSEVTHKRRLSALGPGGLTRERAGFEVRDVHPTHYGRICPIETPEGPNIGLINSLATFARVNKYGFIETPFRRVRDGVVTDEVAYLSAMEEAKYYVAQANAQMDENRKLTEDLVVCRRAGEVIVVGPERVDLMDVSPKQLVSVAAALIPFLENDDANRALMGSNMQRQAVPLVRADAPFVGTGMEAVVARDSGAAIAARRAGIIDQVDATRIVIRATEEADANKPGVDIYRLQKFQRSNQSTCITQKPLVRVGEFVKKGEIIADGPSTEFGELALGRNVLVAFMPWNGYNFEDSILLSERIVKDDVFTSIHIEEFEVMARDTKLGPEEITRDIPNVSEEALKNLDEAGIVYIGAEVNAGDILVGKITPKGESPMTPEEKLLRAIFGEKASDVRDTSLRVPPGVTGTIVEVRVFNRHGVDKDERAQAIEREEIERLAKDRDDEQAILDRNTYARLADVLIGQAPVAGPKGFKKDTTLTRELINDYPRSQWWQFAVIDDRLMTEMEAMQKQYDESKKRLEQRFLDKVEKLQRGDELPPGVMKMVKVFVAVKRKIQPGDKMAGRHGNKGVVSRIVPIEDMPFLEDGTHADIVLNPLGVPSRMNVGQILETHLGWAAAGLGRKVSKAVDAYLKTQDIAPLREEMKAIYSPGELDGLTDEELAEAGNNVRRGVPMATPVFNGAKEADIEQMLEMAGLDRSAQSTLYDGRTGEPFDRKVTMGYIYMLKLHHLVDDKIHARSIGPYSLVTQQPLGGKAQFGGQRFGEMEVWALEAYGAAYTLQEMLTVKSDDVAGRTKVYEAIVRGDDTFEAGIPESFNVLVKEMRSLGLNVELTSSKKAANDQLEPPADAAE</sequence>
<comment type="function">
    <text evidence="1">DNA-dependent RNA polymerase catalyzes the transcription of DNA into RNA using the four ribonucleoside triphosphates as substrates.</text>
</comment>
<comment type="catalytic activity">
    <reaction evidence="1">
        <text>RNA(n) + a ribonucleoside 5'-triphosphate = RNA(n+1) + diphosphate</text>
        <dbReference type="Rhea" id="RHEA:21248"/>
        <dbReference type="Rhea" id="RHEA-COMP:14527"/>
        <dbReference type="Rhea" id="RHEA-COMP:17342"/>
        <dbReference type="ChEBI" id="CHEBI:33019"/>
        <dbReference type="ChEBI" id="CHEBI:61557"/>
        <dbReference type="ChEBI" id="CHEBI:140395"/>
        <dbReference type="EC" id="2.7.7.6"/>
    </reaction>
</comment>
<comment type="subunit">
    <text evidence="1">The RNAP catalytic core consists of 2 alpha, 1 beta, 1 beta' and 1 omega subunit. When a sigma factor is associated with the core the holoenzyme is formed, which can initiate transcription.</text>
</comment>
<comment type="similarity">
    <text evidence="1">Belongs to the RNA polymerase beta chain family.</text>
</comment>
<feature type="chain" id="PRO_1000141712" description="DNA-directed RNA polymerase subunit beta">
    <location>
        <begin position="1"/>
        <end position="1374"/>
    </location>
</feature>
<name>RPOB_METRJ</name>
<proteinExistence type="inferred from homology"/>
<protein>
    <recommendedName>
        <fullName evidence="1">DNA-directed RNA polymerase subunit beta</fullName>
        <shortName evidence="1">RNAP subunit beta</shortName>
        <ecNumber evidence="1">2.7.7.6</ecNumber>
    </recommendedName>
    <alternativeName>
        <fullName evidence="1">RNA polymerase subunit beta</fullName>
    </alternativeName>
    <alternativeName>
        <fullName evidence="1">Transcriptase subunit beta</fullName>
    </alternativeName>
</protein>
<gene>
    <name evidence="1" type="primary">rpoB</name>
    <name type="ordered locus">Mrad2831_3839</name>
</gene>
<evidence type="ECO:0000255" key="1">
    <source>
        <dbReference type="HAMAP-Rule" id="MF_01321"/>
    </source>
</evidence>
<reference key="1">
    <citation type="submission" date="2008-03" db="EMBL/GenBank/DDBJ databases">
        <title>Complete sequence of chromosome of Methylobacterium radiotolerans JCM 2831.</title>
        <authorList>
            <consortium name="US DOE Joint Genome Institute"/>
            <person name="Copeland A."/>
            <person name="Lucas S."/>
            <person name="Lapidus A."/>
            <person name="Glavina del Rio T."/>
            <person name="Dalin E."/>
            <person name="Tice H."/>
            <person name="Bruce D."/>
            <person name="Goodwin L."/>
            <person name="Pitluck S."/>
            <person name="Kiss H."/>
            <person name="Brettin T."/>
            <person name="Detter J.C."/>
            <person name="Han C."/>
            <person name="Kuske C.R."/>
            <person name="Schmutz J."/>
            <person name="Larimer F."/>
            <person name="Land M."/>
            <person name="Hauser L."/>
            <person name="Kyrpides N."/>
            <person name="Mikhailova N."/>
            <person name="Marx C.J."/>
            <person name="Richardson P."/>
        </authorList>
    </citation>
    <scope>NUCLEOTIDE SEQUENCE [LARGE SCALE GENOMIC DNA]</scope>
    <source>
        <strain>ATCC 27329 / DSM 1819 / JCM 2831 / NBRC 15690 / NCIMB 10815 / 0-1</strain>
    </source>
</reference>
<dbReference type="EC" id="2.7.7.6" evidence="1"/>
<dbReference type="EMBL" id="CP001001">
    <property type="protein sequence ID" value="ACB25814.1"/>
    <property type="molecule type" value="Genomic_DNA"/>
</dbReference>
<dbReference type="RefSeq" id="WP_012320772.1">
    <property type="nucleotide sequence ID" value="NC_010505.1"/>
</dbReference>
<dbReference type="SMR" id="B1LY43"/>
<dbReference type="STRING" id="426355.Mrad2831_3839"/>
<dbReference type="GeneID" id="6139893"/>
<dbReference type="KEGG" id="mrd:Mrad2831_3839"/>
<dbReference type="eggNOG" id="COG0085">
    <property type="taxonomic scope" value="Bacteria"/>
</dbReference>
<dbReference type="HOGENOM" id="CLU_000524_4_0_5"/>
<dbReference type="OrthoDB" id="9803954at2"/>
<dbReference type="Proteomes" id="UP000006589">
    <property type="component" value="Chromosome"/>
</dbReference>
<dbReference type="GO" id="GO:0000428">
    <property type="term" value="C:DNA-directed RNA polymerase complex"/>
    <property type="evidence" value="ECO:0007669"/>
    <property type="project" value="UniProtKB-KW"/>
</dbReference>
<dbReference type="GO" id="GO:0003677">
    <property type="term" value="F:DNA binding"/>
    <property type="evidence" value="ECO:0007669"/>
    <property type="project" value="UniProtKB-UniRule"/>
</dbReference>
<dbReference type="GO" id="GO:0003899">
    <property type="term" value="F:DNA-directed RNA polymerase activity"/>
    <property type="evidence" value="ECO:0007669"/>
    <property type="project" value="UniProtKB-UniRule"/>
</dbReference>
<dbReference type="GO" id="GO:0032549">
    <property type="term" value="F:ribonucleoside binding"/>
    <property type="evidence" value="ECO:0007669"/>
    <property type="project" value="InterPro"/>
</dbReference>
<dbReference type="GO" id="GO:0006351">
    <property type="term" value="P:DNA-templated transcription"/>
    <property type="evidence" value="ECO:0007669"/>
    <property type="project" value="UniProtKB-UniRule"/>
</dbReference>
<dbReference type="CDD" id="cd00653">
    <property type="entry name" value="RNA_pol_B_RPB2"/>
    <property type="match status" value="1"/>
</dbReference>
<dbReference type="FunFam" id="3.90.1800.10:FF:000001">
    <property type="entry name" value="DNA-directed RNA polymerase subunit beta"/>
    <property type="match status" value="1"/>
</dbReference>
<dbReference type="Gene3D" id="2.40.50.100">
    <property type="match status" value="1"/>
</dbReference>
<dbReference type="Gene3D" id="2.40.50.150">
    <property type="match status" value="1"/>
</dbReference>
<dbReference type="Gene3D" id="3.90.1100.10">
    <property type="match status" value="3"/>
</dbReference>
<dbReference type="Gene3D" id="2.40.270.10">
    <property type="entry name" value="DNA-directed RNA polymerase, subunit 2, domain 6"/>
    <property type="match status" value="1"/>
</dbReference>
<dbReference type="Gene3D" id="3.90.1800.10">
    <property type="entry name" value="RNA polymerase alpha subunit dimerisation domain"/>
    <property type="match status" value="1"/>
</dbReference>
<dbReference type="Gene3D" id="3.90.1110.10">
    <property type="entry name" value="RNA polymerase Rpb2, domain 2"/>
    <property type="match status" value="1"/>
</dbReference>
<dbReference type="HAMAP" id="MF_01321">
    <property type="entry name" value="RNApol_bact_RpoB"/>
    <property type="match status" value="1"/>
</dbReference>
<dbReference type="InterPro" id="IPR019462">
    <property type="entry name" value="DNA-dir_RNA_pol_bsu_external_1"/>
</dbReference>
<dbReference type="InterPro" id="IPR015712">
    <property type="entry name" value="DNA-dir_RNA_pol_su2"/>
</dbReference>
<dbReference type="InterPro" id="IPR007120">
    <property type="entry name" value="DNA-dir_RNAP_su2_dom"/>
</dbReference>
<dbReference type="InterPro" id="IPR037033">
    <property type="entry name" value="DNA-dir_RNAP_su2_hyb_sf"/>
</dbReference>
<dbReference type="InterPro" id="IPR010243">
    <property type="entry name" value="RNA_pol_bsu_bac"/>
</dbReference>
<dbReference type="InterPro" id="IPR007121">
    <property type="entry name" value="RNA_pol_bsu_CS"/>
</dbReference>
<dbReference type="InterPro" id="IPR007644">
    <property type="entry name" value="RNA_pol_bsu_protrusion"/>
</dbReference>
<dbReference type="InterPro" id="IPR007642">
    <property type="entry name" value="RNA_pol_Rpb2_2"/>
</dbReference>
<dbReference type="InterPro" id="IPR037034">
    <property type="entry name" value="RNA_pol_Rpb2_2_sf"/>
</dbReference>
<dbReference type="InterPro" id="IPR007645">
    <property type="entry name" value="RNA_pol_Rpb2_3"/>
</dbReference>
<dbReference type="InterPro" id="IPR007641">
    <property type="entry name" value="RNA_pol_Rpb2_7"/>
</dbReference>
<dbReference type="InterPro" id="IPR014724">
    <property type="entry name" value="RNA_pol_RPB2_OB-fold"/>
</dbReference>
<dbReference type="NCBIfam" id="NF001616">
    <property type="entry name" value="PRK00405.1"/>
    <property type="match status" value="1"/>
</dbReference>
<dbReference type="NCBIfam" id="TIGR02013">
    <property type="entry name" value="rpoB"/>
    <property type="match status" value="1"/>
</dbReference>
<dbReference type="PANTHER" id="PTHR20856">
    <property type="entry name" value="DNA-DIRECTED RNA POLYMERASE I SUBUNIT 2"/>
    <property type="match status" value="1"/>
</dbReference>
<dbReference type="Pfam" id="PF04563">
    <property type="entry name" value="RNA_pol_Rpb2_1"/>
    <property type="match status" value="1"/>
</dbReference>
<dbReference type="Pfam" id="PF04561">
    <property type="entry name" value="RNA_pol_Rpb2_2"/>
    <property type="match status" value="2"/>
</dbReference>
<dbReference type="Pfam" id="PF04565">
    <property type="entry name" value="RNA_pol_Rpb2_3"/>
    <property type="match status" value="1"/>
</dbReference>
<dbReference type="Pfam" id="PF10385">
    <property type="entry name" value="RNA_pol_Rpb2_45"/>
    <property type="match status" value="1"/>
</dbReference>
<dbReference type="Pfam" id="PF00562">
    <property type="entry name" value="RNA_pol_Rpb2_6"/>
    <property type="match status" value="1"/>
</dbReference>
<dbReference type="Pfam" id="PF04560">
    <property type="entry name" value="RNA_pol_Rpb2_7"/>
    <property type="match status" value="1"/>
</dbReference>
<dbReference type="SUPFAM" id="SSF64484">
    <property type="entry name" value="beta and beta-prime subunits of DNA dependent RNA-polymerase"/>
    <property type="match status" value="1"/>
</dbReference>
<dbReference type="PROSITE" id="PS01166">
    <property type="entry name" value="RNA_POL_BETA"/>
    <property type="match status" value="1"/>
</dbReference>
<keyword id="KW-0240">DNA-directed RNA polymerase</keyword>
<keyword id="KW-0548">Nucleotidyltransferase</keyword>
<keyword id="KW-0804">Transcription</keyword>
<keyword id="KW-0808">Transferase</keyword>
<accession>B1LY43</accession>
<organism>
    <name type="scientific">Methylobacterium radiotolerans (strain ATCC 27329 / DSM 1819 / JCM 2831 / NBRC 15690 / NCIMB 10815 / 0-1)</name>
    <dbReference type="NCBI Taxonomy" id="426355"/>
    <lineage>
        <taxon>Bacteria</taxon>
        <taxon>Pseudomonadati</taxon>
        <taxon>Pseudomonadota</taxon>
        <taxon>Alphaproteobacteria</taxon>
        <taxon>Hyphomicrobiales</taxon>
        <taxon>Methylobacteriaceae</taxon>
        <taxon>Methylobacterium</taxon>
    </lineage>
</organism>